<reference key="1">
    <citation type="submission" date="2008-02" db="EMBL/GenBank/DDBJ databases">
        <title>Complete sequence of Haemophilus somnus 2336.</title>
        <authorList>
            <consortium name="US DOE Joint Genome Institute"/>
            <person name="Siddaramappa S."/>
            <person name="Duncan A.J."/>
            <person name="Challacombe J.F."/>
            <person name="Rainey D."/>
            <person name="Gillaspy A.F."/>
            <person name="Carson M."/>
            <person name="Gipson J."/>
            <person name="Gipson M."/>
            <person name="Bruce D."/>
            <person name="Detter J.C."/>
            <person name="Han C.S."/>
            <person name="Land M."/>
            <person name="Tapia R."/>
            <person name="Thompson L.S."/>
            <person name="Orvis J."/>
            <person name="Zaitshik J."/>
            <person name="Barnes G."/>
            <person name="Brettin T.S."/>
            <person name="Dyer D.W."/>
            <person name="Inzana T.J."/>
        </authorList>
    </citation>
    <scope>NUCLEOTIDE SEQUENCE [LARGE SCALE GENOMIC DNA]</scope>
    <source>
        <strain>2336</strain>
    </source>
</reference>
<keyword id="KW-0067">ATP-binding</keyword>
<keyword id="KW-0963">Cytoplasm</keyword>
<keyword id="KW-0418">Kinase</keyword>
<keyword id="KW-0545">Nucleotide biosynthesis</keyword>
<keyword id="KW-0547">Nucleotide-binding</keyword>
<keyword id="KW-0808">Transferase</keyword>
<evidence type="ECO:0000255" key="1">
    <source>
        <dbReference type="HAMAP-Rule" id="MF_00235"/>
    </source>
</evidence>
<dbReference type="EC" id="2.7.4.3" evidence="1"/>
<dbReference type="EMBL" id="CP000947">
    <property type="protein sequence ID" value="ACA32674.1"/>
    <property type="molecule type" value="Genomic_DNA"/>
</dbReference>
<dbReference type="RefSeq" id="WP_011608804.1">
    <property type="nucleotide sequence ID" value="NC_010519.1"/>
</dbReference>
<dbReference type="SMR" id="B0UT69"/>
<dbReference type="STRING" id="228400.HSM_0988"/>
<dbReference type="GeneID" id="31487286"/>
<dbReference type="KEGG" id="hsm:HSM_0988"/>
<dbReference type="HOGENOM" id="CLU_032354_1_2_6"/>
<dbReference type="UniPathway" id="UPA00588">
    <property type="reaction ID" value="UER00649"/>
</dbReference>
<dbReference type="GO" id="GO:0005737">
    <property type="term" value="C:cytoplasm"/>
    <property type="evidence" value="ECO:0007669"/>
    <property type="project" value="UniProtKB-SubCell"/>
</dbReference>
<dbReference type="GO" id="GO:0004017">
    <property type="term" value="F:adenylate kinase activity"/>
    <property type="evidence" value="ECO:0007669"/>
    <property type="project" value="UniProtKB-UniRule"/>
</dbReference>
<dbReference type="GO" id="GO:0005524">
    <property type="term" value="F:ATP binding"/>
    <property type="evidence" value="ECO:0007669"/>
    <property type="project" value="UniProtKB-UniRule"/>
</dbReference>
<dbReference type="GO" id="GO:0044209">
    <property type="term" value="P:AMP salvage"/>
    <property type="evidence" value="ECO:0007669"/>
    <property type="project" value="UniProtKB-UniRule"/>
</dbReference>
<dbReference type="CDD" id="cd01428">
    <property type="entry name" value="ADK"/>
    <property type="match status" value="1"/>
</dbReference>
<dbReference type="FunFam" id="3.40.50.300:FF:000106">
    <property type="entry name" value="Adenylate kinase mitochondrial"/>
    <property type="match status" value="1"/>
</dbReference>
<dbReference type="Gene3D" id="3.40.50.300">
    <property type="entry name" value="P-loop containing nucleotide triphosphate hydrolases"/>
    <property type="match status" value="1"/>
</dbReference>
<dbReference type="HAMAP" id="MF_00235">
    <property type="entry name" value="Adenylate_kinase_Adk"/>
    <property type="match status" value="1"/>
</dbReference>
<dbReference type="InterPro" id="IPR006259">
    <property type="entry name" value="Adenyl_kin_sub"/>
</dbReference>
<dbReference type="InterPro" id="IPR000850">
    <property type="entry name" value="Adenylat/UMP-CMP_kin"/>
</dbReference>
<dbReference type="InterPro" id="IPR033690">
    <property type="entry name" value="Adenylat_kinase_CS"/>
</dbReference>
<dbReference type="InterPro" id="IPR007862">
    <property type="entry name" value="Adenylate_kinase_lid-dom"/>
</dbReference>
<dbReference type="InterPro" id="IPR027417">
    <property type="entry name" value="P-loop_NTPase"/>
</dbReference>
<dbReference type="NCBIfam" id="TIGR01351">
    <property type="entry name" value="adk"/>
    <property type="match status" value="1"/>
</dbReference>
<dbReference type="NCBIfam" id="NF001379">
    <property type="entry name" value="PRK00279.1-1"/>
    <property type="match status" value="1"/>
</dbReference>
<dbReference type="NCBIfam" id="NF001380">
    <property type="entry name" value="PRK00279.1-2"/>
    <property type="match status" value="1"/>
</dbReference>
<dbReference type="NCBIfam" id="NF001381">
    <property type="entry name" value="PRK00279.1-3"/>
    <property type="match status" value="1"/>
</dbReference>
<dbReference type="PANTHER" id="PTHR23359">
    <property type="entry name" value="NUCLEOTIDE KINASE"/>
    <property type="match status" value="1"/>
</dbReference>
<dbReference type="Pfam" id="PF00406">
    <property type="entry name" value="ADK"/>
    <property type="match status" value="1"/>
</dbReference>
<dbReference type="Pfam" id="PF05191">
    <property type="entry name" value="ADK_lid"/>
    <property type="match status" value="1"/>
</dbReference>
<dbReference type="PRINTS" id="PR00094">
    <property type="entry name" value="ADENYLTKNASE"/>
</dbReference>
<dbReference type="SUPFAM" id="SSF52540">
    <property type="entry name" value="P-loop containing nucleoside triphosphate hydrolases"/>
    <property type="match status" value="1"/>
</dbReference>
<dbReference type="PROSITE" id="PS00113">
    <property type="entry name" value="ADENYLATE_KINASE"/>
    <property type="match status" value="1"/>
</dbReference>
<feature type="chain" id="PRO_1000078278" description="Adenylate kinase">
    <location>
        <begin position="1"/>
        <end position="214"/>
    </location>
</feature>
<feature type="region of interest" description="NMP" evidence="1">
    <location>
        <begin position="30"/>
        <end position="59"/>
    </location>
</feature>
<feature type="region of interest" description="LID" evidence="1">
    <location>
        <begin position="122"/>
        <end position="159"/>
    </location>
</feature>
<feature type="binding site" evidence="1">
    <location>
        <begin position="10"/>
        <end position="15"/>
    </location>
    <ligand>
        <name>ATP</name>
        <dbReference type="ChEBI" id="CHEBI:30616"/>
    </ligand>
</feature>
<feature type="binding site" evidence="1">
    <location>
        <position position="31"/>
    </location>
    <ligand>
        <name>AMP</name>
        <dbReference type="ChEBI" id="CHEBI:456215"/>
    </ligand>
</feature>
<feature type="binding site" evidence="1">
    <location>
        <position position="36"/>
    </location>
    <ligand>
        <name>AMP</name>
        <dbReference type="ChEBI" id="CHEBI:456215"/>
    </ligand>
</feature>
<feature type="binding site" evidence="1">
    <location>
        <begin position="57"/>
        <end position="59"/>
    </location>
    <ligand>
        <name>AMP</name>
        <dbReference type="ChEBI" id="CHEBI:456215"/>
    </ligand>
</feature>
<feature type="binding site" evidence="1">
    <location>
        <begin position="85"/>
        <end position="88"/>
    </location>
    <ligand>
        <name>AMP</name>
        <dbReference type="ChEBI" id="CHEBI:456215"/>
    </ligand>
</feature>
<feature type="binding site" evidence="1">
    <location>
        <position position="92"/>
    </location>
    <ligand>
        <name>AMP</name>
        <dbReference type="ChEBI" id="CHEBI:456215"/>
    </ligand>
</feature>
<feature type="binding site" evidence="1">
    <location>
        <position position="123"/>
    </location>
    <ligand>
        <name>ATP</name>
        <dbReference type="ChEBI" id="CHEBI:30616"/>
    </ligand>
</feature>
<feature type="binding site" evidence="1">
    <location>
        <begin position="132"/>
        <end position="133"/>
    </location>
    <ligand>
        <name>ATP</name>
        <dbReference type="ChEBI" id="CHEBI:30616"/>
    </ligand>
</feature>
<feature type="binding site" evidence="1">
    <location>
        <position position="156"/>
    </location>
    <ligand>
        <name>AMP</name>
        <dbReference type="ChEBI" id="CHEBI:456215"/>
    </ligand>
</feature>
<feature type="binding site" evidence="1">
    <location>
        <position position="167"/>
    </location>
    <ligand>
        <name>AMP</name>
        <dbReference type="ChEBI" id="CHEBI:456215"/>
    </ligand>
</feature>
<feature type="binding site" evidence="1">
    <location>
        <position position="200"/>
    </location>
    <ligand>
        <name>ATP</name>
        <dbReference type="ChEBI" id="CHEBI:30616"/>
    </ligand>
</feature>
<name>KAD_HISS2</name>
<comment type="function">
    <text evidence="1">Catalyzes the reversible transfer of the terminal phosphate group between ATP and AMP. Plays an important role in cellular energy homeostasis and in adenine nucleotide metabolism.</text>
</comment>
<comment type="catalytic activity">
    <reaction evidence="1">
        <text>AMP + ATP = 2 ADP</text>
        <dbReference type="Rhea" id="RHEA:12973"/>
        <dbReference type="ChEBI" id="CHEBI:30616"/>
        <dbReference type="ChEBI" id="CHEBI:456215"/>
        <dbReference type="ChEBI" id="CHEBI:456216"/>
        <dbReference type="EC" id="2.7.4.3"/>
    </reaction>
</comment>
<comment type="pathway">
    <text evidence="1">Purine metabolism; AMP biosynthesis via salvage pathway; AMP from ADP: step 1/1.</text>
</comment>
<comment type="subunit">
    <text evidence="1">Monomer.</text>
</comment>
<comment type="subcellular location">
    <subcellularLocation>
        <location evidence="1">Cytoplasm</location>
    </subcellularLocation>
</comment>
<comment type="domain">
    <text evidence="1">Consists of three domains, a large central CORE domain and two small peripheral domains, NMPbind and LID, which undergo movements during catalysis. The LID domain closes over the site of phosphoryl transfer upon ATP binding. Assembling and dissambling the active center during each catalytic cycle provides an effective means to prevent ATP hydrolysis.</text>
</comment>
<comment type="similarity">
    <text evidence="1">Belongs to the adenylate kinase family.</text>
</comment>
<sequence length="214" mass="23733">MKIILLGAPGAGKGTQAQFITNKFGIPQISTGDMLRAAIKAGSELGQKAKILMDMGQLVPDDLIISLVKERVAQEDCEKGFLLDGFPRTIPQADALKSVGISIDYVLEFDVPDEVIVERMSGRRVHPASGRTYHIVYNPPKVEDKDDITGEDLILRADDKPETVLDRLKIYHNTTKLLVDYYQAEAAQGNTKYFRLDGTQKVEEVSQELDKILS</sequence>
<gene>
    <name evidence="1" type="primary">adk</name>
    <name type="ordered locus">HSM_0988</name>
</gene>
<protein>
    <recommendedName>
        <fullName evidence="1">Adenylate kinase</fullName>
        <shortName evidence="1">AK</shortName>
        <ecNumber evidence="1">2.7.4.3</ecNumber>
    </recommendedName>
    <alternativeName>
        <fullName evidence="1">ATP-AMP transphosphorylase</fullName>
    </alternativeName>
    <alternativeName>
        <fullName evidence="1">ATP:AMP phosphotransferase</fullName>
    </alternativeName>
    <alternativeName>
        <fullName evidence="1">Adenylate monophosphate kinase</fullName>
    </alternativeName>
</protein>
<accession>B0UT69</accession>
<proteinExistence type="inferred from homology"/>
<organism>
    <name type="scientific">Histophilus somni (strain 2336)</name>
    <name type="common">Haemophilus somnus</name>
    <dbReference type="NCBI Taxonomy" id="228400"/>
    <lineage>
        <taxon>Bacteria</taxon>
        <taxon>Pseudomonadati</taxon>
        <taxon>Pseudomonadota</taxon>
        <taxon>Gammaproteobacteria</taxon>
        <taxon>Pasteurellales</taxon>
        <taxon>Pasteurellaceae</taxon>
        <taxon>Histophilus</taxon>
    </lineage>
</organism>